<gene>
    <name type="primary">nudK</name>
    <name type="ordered locus">SSON_2547</name>
</gene>
<keyword id="KW-0378">Hydrolase</keyword>
<keyword id="KW-0460">Magnesium</keyword>
<keyword id="KW-0479">Metal-binding</keyword>
<keyword id="KW-1185">Reference proteome</keyword>
<dbReference type="EC" id="3.6.1.-" evidence="1"/>
<dbReference type="EMBL" id="CP000038">
    <property type="protein sequence ID" value="AAZ89176.1"/>
    <property type="molecule type" value="Genomic_DNA"/>
</dbReference>
<dbReference type="RefSeq" id="WP_000193711.1">
    <property type="nucleotide sequence ID" value="NC_007384.1"/>
</dbReference>
<dbReference type="SMR" id="Q3YZ86"/>
<dbReference type="GeneID" id="75204261"/>
<dbReference type="KEGG" id="ssn:SSON_2547"/>
<dbReference type="HOGENOM" id="CLU_062658_6_0_6"/>
<dbReference type="Proteomes" id="UP000002529">
    <property type="component" value="Chromosome"/>
</dbReference>
<dbReference type="GO" id="GO:0005829">
    <property type="term" value="C:cytosol"/>
    <property type="evidence" value="ECO:0007669"/>
    <property type="project" value="TreeGrafter"/>
</dbReference>
<dbReference type="GO" id="GO:0016818">
    <property type="term" value="F:hydrolase activity, acting on acid anhydrides, in phosphorus-containing anhydrides"/>
    <property type="evidence" value="ECO:0007669"/>
    <property type="project" value="InterPro"/>
</dbReference>
<dbReference type="GO" id="GO:0046872">
    <property type="term" value="F:metal ion binding"/>
    <property type="evidence" value="ECO:0007669"/>
    <property type="project" value="UniProtKB-KW"/>
</dbReference>
<dbReference type="GO" id="GO:0006753">
    <property type="term" value="P:nucleoside phosphate metabolic process"/>
    <property type="evidence" value="ECO:0007669"/>
    <property type="project" value="TreeGrafter"/>
</dbReference>
<dbReference type="GO" id="GO:0019693">
    <property type="term" value="P:ribose phosphate metabolic process"/>
    <property type="evidence" value="ECO:0007669"/>
    <property type="project" value="TreeGrafter"/>
</dbReference>
<dbReference type="CDD" id="cd24157">
    <property type="entry name" value="NUDIX_GDPMK"/>
    <property type="match status" value="1"/>
</dbReference>
<dbReference type="FunFam" id="3.90.79.10:FF:000010">
    <property type="entry name" value="GDP-mannose pyrophosphatase NudK"/>
    <property type="match status" value="1"/>
</dbReference>
<dbReference type="Gene3D" id="3.90.79.10">
    <property type="entry name" value="Nucleoside Triphosphate Pyrophosphohydrolase"/>
    <property type="match status" value="1"/>
</dbReference>
<dbReference type="InterPro" id="IPR004385">
    <property type="entry name" value="NDP_pyrophosphatase"/>
</dbReference>
<dbReference type="InterPro" id="IPR015797">
    <property type="entry name" value="NUDIX_hydrolase-like_dom_sf"/>
</dbReference>
<dbReference type="InterPro" id="IPR000086">
    <property type="entry name" value="NUDIX_hydrolase_dom"/>
</dbReference>
<dbReference type="NCBIfam" id="TIGR00052">
    <property type="entry name" value="nudix-type nucleoside diphosphatase, YffH/AdpP family"/>
    <property type="match status" value="1"/>
</dbReference>
<dbReference type="NCBIfam" id="NF011585">
    <property type="entry name" value="PRK15009.1"/>
    <property type="match status" value="1"/>
</dbReference>
<dbReference type="PANTHER" id="PTHR11839:SF18">
    <property type="entry name" value="NUDIX HYDROLASE DOMAIN-CONTAINING PROTEIN"/>
    <property type="match status" value="1"/>
</dbReference>
<dbReference type="PANTHER" id="PTHR11839">
    <property type="entry name" value="UDP/ADP-SUGAR PYROPHOSPHATASE"/>
    <property type="match status" value="1"/>
</dbReference>
<dbReference type="Pfam" id="PF00293">
    <property type="entry name" value="NUDIX"/>
    <property type="match status" value="1"/>
</dbReference>
<dbReference type="SUPFAM" id="SSF55811">
    <property type="entry name" value="Nudix"/>
    <property type="match status" value="1"/>
</dbReference>
<dbReference type="PROSITE" id="PS51462">
    <property type="entry name" value="NUDIX"/>
    <property type="match status" value="1"/>
</dbReference>
<protein>
    <recommendedName>
        <fullName>GDP-mannose pyrophosphatase</fullName>
        <ecNumber evidence="1">3.6.1.-</ecNumber>
    </recommendedName>
    <alternativeName>
        <fullName>GDP-mannose hydrolase</fullName>
    </alternativeName>
    <alternativeName>
        <fullName>GDPMK</fullName>
    </alternativeName>
</protein>
<comment type="function">
    <text evidence="1">Nucleoside diphosphate sugar hydrolase that hydrolyzes GDP-mannose as its preferred substrate, yielding GMP and mannose-1-phosphate.</text>
</comment>
<comment type="catalytic activity">
    <reaction evidence="1">
        <text>GDP-alpha-D-mannose + H2O = alpha-D-mannose 1-phosphate + GMP + 2 H(+)</text>
        <dbReference type="Rhea" id="RHEA:27978"/>
        <dbReference type="ChEBI" id="CHEBI:15377"/>
        <dbReference type="ChEBI" id="CHEBI:15378"/>
        <dbReference type="ChEBI" id="CHEBI:57527"/>
        <dbReference type="ChEBI" id="CHEBI:58115"/>
        <dbReference type="ChEBI" id="CHEBI:58409"/>
    </reaction>
</comment>
<comment type="cofactor">
    <cofactor evidence="1">
        <name>Mg(2+)</name>
        <dbReference type="ChEBI" id="CHEBI:18420"/>
    </cofactor>
</comment>
<comment type="subunit">
    <text evidence="1">Homodimer.</text>
</comment>
<comment type="domain">
    <text evidence="1">In the dimer, the N-terminal domains are swapped between the two monomers, such that residues of both chains contribute to the active site.</text>
</comment>
<comment type="similarity">
    <text evidence="3">Belongs to the Nudix hydrolase family. NudK subfamily.</text>
</comment>
<evidence type="ECO:0000250" key="1">
    <source>
        <dbReference type="UniProtKB" id="P37128"/>
    </source>
</evidence>
<evidence type="ECO:0000255" key="2">
    <source>
        <dbReference type="PROSITE-ProRule" id="PRU00794"/>
    </source>
</evidence>
<evidence type="ECO:0000305" key="3"/>
<proteinExistence type="inferred from homology"/>
<accession>Q3YZ86</accession>
<feature type="chain" id="PRO_0000342504" description="GDP-mannose pyrophosphatase">
    <location>
        <begin position="1"/>
        <end position="191"/>
    </location>
</feature>
<feature type="domain" description="Nudix hydrolase" evidence="2">
    <location>
        <begin position="43"/>
        <end position="180"/>
    </location>
</feature>
<feature type="short sequence motif" description="Nudix box">
    <location>
        <begin position="86"/>
        <end position="106"/>
    </location>
</feature>
<feature type="binding site" description="in other chain" evidence="1">
    <location>
        <position position="17"/>
    </location>
    <ligand>
        <name>GDP-alpha-D-mannose</name>
        <dbReference type="ChEBI" id="CHEBI:57527"/>
        <note>ligand shared between dimeric partners</note>
    </ligand>
</feature>
<feature type="binding site" evidence="1">
    <location>
        <begin position="38"/>
        <end position="40"/>
    </location>
    <ligand>
        <name>GDP-alpha-D-mannose</name>
        <dbReference type="ChEBI" id="CHEBI:57527"/>
        <note>ligand shared between dimeric partners</note>
    </ligand>
</feature>
<feature type="binding site" description="in other chain" evidence="1">
    <location>
        <position position="67"/>
    </location>
    <ligand>
        <name>GDP-alpha-D-mannose</name>
        <dbReference type="ChEBI" id="CHEBI:57527"/>
        <note>ligand shared between dimeric partners</note>
    </ligand>
</feature>
<feature type="binding site" description="in other chain" evidence="1">
    <location>
        <begin position="85"/>
        <end position="87"/>
    </location>
    <ligand>
        <name>GDP-alpha-D-mannose</name>
        <dbReference type="ChEBI" id="CHEBI:57527"/>
        <note>ligand shared between dimeric partners</note>
    </ligand>
</feature>
<feature type="binding site" evidence="1">
    <location>
        <position position="85"/>
    </location>
    <ligand>
        <name>Mg(2+)</name>
        <dbReference type="ChEBI" id="CHEBI:18420"/>
        <label>1</label>
    </ligand>
</feature>
<feature type="binding site" evidence="1">
    <location>
        <position position="100"/>
    </location>
    <ligand>
        <name>Mg(2+)</name>
        <dbReference type="ChEBI" id="CHEBI:18420"/>
        <label>2</label>
    </ligand>
</feature>
<feature type="binding site" description="in other chain" evidence="1">
    <location>
        <position position="104"/>
    </location>
    <ligand>
        <name>GDP-alpha-D-mannose</name>
        <dbReference type="ChEBI" id="CHEBI:57527"/>
        <note>ligand shared between dimeric partners</note>
    </ligand>
</feature>
<feature type="binding site" evidence="1">
    <location>
        <position position="104"/>
    </location>
    <ligand>
        <name>Mg(2+)</name>
        <dbReference type="ChEBI" id="CHEBI:18420"/>
        <label>1</label>
    </ligand>
</feature>
<feature type="binding site" evidence="1">
    <location>
        <position position="104"/>
    </location>
    <ligand>
        <name>Mg(2+)</name>
        <dbReference type="ChEBI" id="CHEBI:18420"/>
        <label>2</label>
    </ligand>
</feature>
<feature type="binding site" description="in other chain" evidence="1">
    <location>
        <position position="127"/>
    </location>
    <ligand>
        <name>GDP-alpha-D-mannose</name>
        <dbReference type="ChEBI" id="CHEBI:57527"/>
        <note>ligand shared between dimeric partners</note>
    </ligand>
</feature>
<feature type="binding site" description="in other chain" evidence="1">
    <location>
        <begin position="150"/>
        <end position="151"/>
    </location>
    <ligand>
        <name>GDP-alpha-D-mannose</name>
        <dbReference type="ChEBI" id="CHEBI:57527"/>
        <note>ligand shared between dimeric partners</note>
    </ligand>
</feature>
<feature type="binding site" evidence="1">
    <location>
        <position position="151"/>
    </location>
    <ligand>
        <name>Mg(2+)</name>
        <dbReference type="ChEBI" id="CHEBI:18420"/>
        <label>2</label>
    </ligand>
</feature>
<feature type="binding site" description="in other chain" evidence="1">
    <location>
        <position position="176"/>
    </location>
    <ligand>
        <name>GDP-alpha-D-mannose</name>
        <dbReference type="ChEBI" id="CHEBI:57527"/>
        <note>ligand shared between dimeric partners</note>
    </ligand>
</feature>
<name>NUDK_SHISS</name>
<sequence length="191" mass="21733">MTQQITLIKDKILSDNYFTLHNITYDLTRKDGEVIRHKREVYDRGNGATILLYNAKKKTVVLIRQFRVATWVNGNESGQLIETCAGLLDNDEPEVCIRKEAIEETGYEVGEVRKLFELYMSPGGVTELIHFFIAEYSDNQRANAGGGVEDEDIEVLELPFSQALEMIKTGEIRDGKTVLLLNYLQTSHLMD</sequence>
<reference key="1">
    <citation type="journal article" date="2005" name="Nucleic Acids Res.">
        <title>Genome dynamics and diversity of Shigella species, the etiologic agents of bacillary dysentery.</title>
        <authorList>
            <person name="Yang F."/>
            <person name="Yang J."/>
            <person name="Zhang X."/>
            <person name="Chen L."/>
            <person name="Jiang Y."/>
            <person name="Yan Y."/>
            <person name="Tang X."/>
            <person name="Wang J."/>
            <person name="Xiong Z."/>
            <person name="Dong J."/>
            <person name="Xue Y."/>
            <person name="Zhu Y."/>
            <person name="Xu X."/>
            <person name="Sun L."/>
            <person name="Chen S."/>
            <person name="Nie H."/>
            <person name="Peng J."/>
            <person name="Xu J."/>
            <person name="Wang Y."/>
            <person name="Yuan Z."/>
            <person name="Wen Y."/>
            <person name="Yao Z."/>
            <person name="Shen Y."/>
            <person name="Qiang B."/>
            <person name="Hou Y."/>
            <person name="Yu J."/>
            <person name="Jin Q."/>
        </authorList>
    </citation>
    <scope>NUCLEOTIDE SEQUENCE [LARGE SCALE GENOMIC DNA]</scope>
    <source>
        <strain>Ss046</strain>
    </source>
</reference>
<organism>
    <name type="scientific">Shigella sonnei (strain Ss046)</name>
    <dbReference type="NCBI Taxonomy" id="300269"/>
    <lineage>
        <taxon>Bacteria</taxon>
        <taxon>Pseudomonadati</taxon>
        <taxon>Pseudomonadota</taxon>
        <taxon>Gammaproteobacteria</taxon>
        <taxon>Enterobacterales</taxon>
        <taxon>Enterobacteriaceae</taxon>
        <taxon>Shigella</taxon>
    </lineage>
</organism>